<reference key="1">
    <citation type="journal article" date="2001" name="Proc. Natl. Acad. Sci. U.S.A.">
        <title>Trace amines: identification of a family of mammalian G protein-coupled receptors.</title>
        <authorList>
            <person name="Borowsky B."/>
            <person name="Adham N."/>
            <person name="Jones K.A."/>
            <person name="Raddatz R."/>
            <person name="Artymyshyn R."/>
            <person name="Ogozalek K.L."/>
            <person name="Durkin M.M."/>
            <person name="Lakhlani P.P."/>
            <person name="Bonini J.A."/>
            <person name="Pathirana S."/>
            <person name="Boyle N."/>
            <person name="Pu X."/>
            <person name="Kouranova E."/>
            <person name="Lichtblau H."/>
            <person name="Ochoa F.Y."/>
            <person name="Branchek T.A."/>
            <person name="Gerald C."/>
        </authorList>
    </citation>
    <scope>NUCLEOTIDE SEQUENCE [GENOMIC DNA]</scope>
    <source>
        <strain>Sprague-Dawley</strain>
    </source>
</reference>
<reference key="2">
    <citation type="journal article" date="2012" name="ACS Chem. Biol.">
        <title>Agonists for 13 trace amine-associated receptors provide insight into the molecular basis of odor selectivity.</title>
        <authorList>
            <person name="Ferrero D.M."/>
            <person name="Wacker D."/>
            <person name="Roque M.A."/>
            <person name="Baldwin M.W."/>
            <person name="Stevens R.C."/>
            <person name="Liberles S.D."/>
        </authorList>
    </citation>
    <scope>FUNCTION</scope>
</reference>
<feature type="chain" id="PRO_0000070173" description="Trace amine-associated receptor 7h">
    <location>
        <begin position="1"/>
        <end position="358"/>
    </location>
</feature>
<feature type="topological domain" description="Extracellular" evidence="3">
    <location>
        <begin position="1"/>
        <end position="47"/>
    </location>
</feature>
<feature type="transmembrane region" description="Helical; Name=1" evidence="3">
    <location>
        <begin position="48"/>
        <end position="68"/>
    </location>
</feature>
<feature type="topological domain" description="Cytoplasmic" evidence="3">
    <location>
        <begin position="69"/>
        <end position="83"/>
    </location>
</feature>
<feature type="transmembrane region" description="Helical; Name=2" evidence="3">
    <location>
        <begin position="84"/>
        <end position="104"/>
    </location>
</feature>
<feature type="topological domain" description="Extracellular" evidence="3">
    <location>
        <begin position="105"/>
        <end position="125"/>
    </location>
</feature>
<feature type="transmembrane region" description="Helical; Name=3" evidence="3">
    <location>
        <begin position="126"/>
        <end position="143"/>
    </location>
</feature>
<feature type="topological domain" description="Cytoplasmic" evidence="3">
    <location>
        <begin position="144"/>
        <end position="166"/>
    </location>
</feature>
<feature type="transmembrane region" description="Helical; Name=4" evidence="3">
    <location>
        <begin position="167"/>
        <end position="187"/>
    </location>
</feature>
<feature type="topological domain" description="Extracellular" evidence="3">
    <location>
        <begin position="188"/>
        <end position="217"/>
    </location>
</feature>
<feature type="transmembrane region" description="Helical; Name=5" evidence="3">
    <location>
        <begin position="218"/>
        <end position="238"/>
    </location>
</feature>
<feature type="topological domain" description="Cytoplasmic" evidence="3">
    <location>
        <begin position="239"/>
        <end position="274"/>
    </location>
</feature>
<feature type="transmembrane region" description="Helical; Name=6" evidence="3">
    <location>
        <begin position="275"/>
        <end position="295"/>
    </location>
</feature>
<feature type="topological domain" description="Extracellular" evidence="3">
    <location>
        <begin position="296"/>
        <end position="309"/>
    </location>
</feature>
<feature type="transmembrane region" description="Helical; Name=7" evidence="3">
    <location>
        <begin position="310"/>
        <end position="333"/>
    </location>
</feature>
<feature type="topological domain" description="Cytoplasmic" evidence="3">
    <location>
        <begin position="334"/>
        <end position="358"/>
    </location>
</feature>
<feature type="glycosylation site" description="N-linked (GlcNAc...) asparagine" evidence="3">
    <location>
        <position position="34"/>
    </location>
</feature>
<feature type="glycosylation site" description="N-linked (GlcNAc...) asparagine" evidence="3">
    <location>
        <position position="210"/>
    </location>
</feature>
<feature type="disulfide bond" evidence="1">
    <location>
        <begin position="37"/>
        <end position="201"/>
    </location>
</feature>
<feature type="disulfide bond" evidence="4">
    <location>
        <begin position="120"/>
        <end position="205"/>
    </location>
</feature>
<comment type="function">
    <text evidence="5 8">Olfactory receptor specific for N,N-dimethylalkylamines trace amines (PubMed:22545963). Trace amine compounds are enriched in animal body fluids and act on trace amine-associated receptors (TAARs) to elicit both intraspecific and interspecific innate behaviors (PubMed:22545963). Ligand-binding causes a conformation change that triggers signaling via G(s)-class of G alpha proteins (GNAL or GNAS) (Probable).</text>
</comment>
<comment type="subcellular location">
    <subcellularLocation>
        <location evidence="2">Cell membrane</location>
        <topology evidence="3">Multi-pass membrane protein</topology>
    </subcellularLocation>
</comment>
<comment type="domain">
    <text evidence="1">In addition to the well known disulfide bond common to G-protein coupled receptor 1 family, trace amine-associated receptors (TAARs) contain an unique disulfide bond (Cys-37-Cys-201) connecting the N-terminus to the extracellular Loop 2 (ECL2), which is required for agonist-induced receptor activation.</text>
</comment>
<comment type="similarity">
    <text evidence="4">Belongs to the G-protein coupled receptor 1 family.</text>
</comment>
<organism>
    <name type="scientific">Rattus norvegicus</name>
    <name type="common">Rat</name>
    <dbReference type="NCBI Taxonomy" id="10116"/>
    <lineage>
        <taxon>Eukaryota</taxon>
        <taxon>Metazoa</taxon>
        <taxon>Chordata</taxon>
        <taxon>Craniata</taxon>
        <taxon>Vertebrata</taxon>
        <taxon>Euteleostomi</taxon>
        <taxon>Mammalia</taxon>
        <taxon>Eutheria</taxon>
        <taxon>Euarchontoglires</taxon>
        <taxon>Glires</taxon>
        <taxon>Rodentia</taxon>
        <taxon>Myomorpha</taxon>
        <taxon>Muroidea</taxon>
        <taxon>Muridae</taxon>
        <taxon>Murinae</taxon>
        <taxon>Rattus</taxon>
    </lineage>
</organism>
<protein>
    <recommendedName>
        <fullName evidence="7">Trace amine-associated receptor 7h</fullName>
        <shortName evidence="7">TaR-7h</shortName>
        <shortName evidence="7">Trace amine receptor 7h</shortName>
    </recommendedName>
    <alternativeName>
        <fullName evidence="6">Trace amine receptor 6</fullName>
        <shortName evidence="6">TaR-6</shortName>
    </alternativeName>
</protein>
<dbReference type="EMBL" id="AF380194">
    <property type="protein sequence ID" value="AAK71245.1"/>
    <property type="molecule type" value="Genomic_DNA"/>
</dbReference>
<dbReference type="RefSeq" id="NP_783177.1">
    <property type="nucleotide sequence ID" value="NM_175587.1"/>
</dbReference>
<dbReference type="SMR" id="Q923Y4"/>
<dbReference type="FunCoup" id="Q923Y4">
    <property type="interactions" value="32"/>
</dbReference>
<dbReference type="STRING" id="10116.ENSRNOP00000044226"/>
<dbReference type="GlyCosmos" id="Q923Y4">
    <property type="glycosylation" value="2 sites, No reported glycans"/>
</dbReference>
<dbReference type="GlyGen" id="Q923Y4">
    <property type="glycosylation" value="2 sites"/>
</dbReference>
<dbReference type="PaxDb" id="10116-ENSRNOP00000044226"/>
<dbReference type="GeneID" id="294130"/>
<dbReference type="KEGG" id="rno:294130"/>
<dbReference type="AGR" id="RGD:631385"/>
<dbReference type="CTD" id="294130"/>
<dbReference type="RGD" id="631385">
    <property type="gene designation" value="Taar7h"/>
</dbReference>
<dbReference type="VEuPathDB" id="HostDB:ENSRNOG00000067484"/>
<dbReference type="eggNOG" id="KOG3656">
    <property type="taxonomic scope" value="Eukaryota"/>
</dbReference>
<dbReference type="HOGENOM" id="CLU_009579_11_0_1"/>
<dbReference type="InParanoid" id="Q923Y4"/>
<dbReference type="OrthoDB" id="5959645at2759"/>
<dbReference type="PhylomeDB" id="Q923Y4"/>
<dbReference type="TreeFam" id="TF343107"/>
<dbReference type="PRO" id="PR:Q923Y4"/>
<dbReference type="Proteomes" id="UP000002494">
    <property type="component" value="Chromosome 1"/>
</dbReference>
<dbReference type="GO" id="GO:0005886">
    <property type="term" value="C:plasma membrane"/>
    <property type="evidence" value="ECO:0000318"/>
    <property type="project" value="GO_Central"/>
</dbReference>
<dbReference type="GO" id="GO:0001594">
    <property type="term" value="F:trace-amine receptor activity"/>
    <property type="evidence" value="ECO:0000314"/>
    <property type="project" value="UniProtKB"/>
</dbReference>
<dbReference type="GO" id="GO:0007186">
    <property type="term" value="P:G protein-coupled receptor signaling pathway"/>
    <property type="evidence" value="ECO:0000318"/>
    <property type="project" value="GO_Central"/>
</dbReference>
<dbReference type="FunFam" id="1.20.1070.10:FF:000030">
    <property type="entry name" value="trace amine-associated receptor 1"/>
    <property type="match status" value="1"/>
</dbReference>
<dbReference type="Gene3D" id="1.20.1070.10">
    <property type="entry name" value="Rhodopsin 7-helix transmembrane proteins"/>
    <property type="match status" value="1"/>
</dbReference>
<dbReference type="InterPro" id="IPR000276">
    <property type="entry name" value="GPCR_Rhodpsn"/>
</dbReference>
<dbReference type="InterPro" id="IPR017452">
    <property type="entry name" value="GPCR_Rhodpsn_7TM"/>
</dbReference>
<dbReference type="InterPro" id="IPR050569">
    <property type="entry name" value="TAAR"/>
</dbReference>
<dbReference type="InterPro" id="IPR009132">
    <property type="entry name" value="TAAR_fam"/>
</dbReference>
<dbReference type="PANTHER" id="PTHR24249">
    <property type="entry name" value="HISTAMINE RECEPTOR-RELATED G-PROTEIN COUPLED RECEPTOR"/>
    <property type="match status" value="1"/>
</dbReference>
<dbReference type="PANTHER" id="PTHR24249:SF78">
    <property type="entry name" value="TRACE AMINE-ASSOCIATED RECEPTOR 7A-RELATED"/>
    <property type="match status" value="1"/>
</dbReference>
<dbReference type="Pfam" id="PF00001">
    <property type="entry name" value="7tm_1"/>
    <property type="match status" value="1"/>
</dbReference>
<dbReference type="PRINTS" id="PR00237">
    <property type="entry name" value="GPCRRHODOPSN"/>
</dbReference>
<dbReference type="PRINTS" id="PR01830">
    <property type="entry name" value="TRACEAMINER"/>
</dbReference>
<dbReference type="SMART" id="SM01381">
    <property type="entry name" value="7TM_GPCR_Srsx"/>
    <property type="match status" value="1"/>
</dbReference>
<dbReference type="SUPFAM" id="SSF81321">
    <property type="entry name" value="Family A G protein-coupled receptor-like"/>
    <property type="match status" value="1"/>
</dbReference>
<dbReference type="PROSITE" id="PS00237">
    <property type="entry name" value="G_PROTEIN_RECEP_F1_1"/>
    <property type="match status" value="1"/>
</dbReference>
<dbReference type="PROSITE" id="PS50262">
    <property type="entry name" value="G_PROTEIN_RECEP_F1_2"/>
    <property type="match status" value="1"/>
</dbReference>
<proteinExistence type="inferred from homology"/>
<keyword id="KW-1003">Cell membrane</keyword>
<keyword id="KW-1015">Disulfide bond</keyword>
<keyword id="KW-0297">G-protein coupled receptor</keyword>
<keyword id="KW-0325">Glycoprotein</keyword>
<keyword id="KW-0472">Membrane</keyword>
<keyword id="KW-0675">Receptor</keyword>
<keyword id="KW-1185">Reference proteome</keyword>
<keyword id="KW-0807">Transducer</keyword>
<keyword id="KW-0812">Transmembrane</keyword>
<keyword id="KW-1133">Transmembrane helix</keyword>
<accession>Q923Y4</accession>
<evidence type="ECO:0000250" key="1">
    <source>
        <dbReference type="UniProtKB" id="Q5QD04"/>
    </source>
</evidence>
<evidence type="ECO:0000250" key="2">
    <source>
        <dbReference type="UniProtKB" id="Q923X5"/>
    </source>
</evidence>
<evidence type="ECO:0000255" key="3"/>
<evidence type="ECO:0000255" key="4">
    <source>
        <dbReference type="PROSITE-ProRule" id="PRU00521"/>
    </source>
</evidence>
<evidence type="ECO:0000269" key="5">
    <source>
    </source>
</evidence>
<evidence type="ECO:0000303" key="6">
    <source>
    </source>
</evidence>
<evidence type="ECO:0000303" key="7">
    <source>
    </source>
</evidence>
<evidence type="ECO:0000305" key="8"/>
<evidence type="ECO:0000312" key="9">
    <source>
        <dbReference type="RGD" id="631385"/>
    </source>
</evidence>
<sequence>MATDDESFPWDQDSILSRDLLSALSPQLCYENLNRSCVRSPYSPGPRLILYAVFGFGAVLAVCGNLLVMTSILHFRQLHSPANFLVASLACADLLVGLTVMPFSMVRSVEGCWYFGDSYCKLHTSFDMSFCCSSLLHLCFISVDRYIAVSDPLIYPIRFTASVSGKCITFSWFLSIIYGFSLIYTGASEAGLKDLVSALSCVGGCQIPMNQSCVLINFLLFLVPTLVMMTVYSKIFLIAKQQAQNMEKMSKQTTRASDSYKDRVAKRERKAAKTLGIAVAAFLLSWLPYLIDSIIDAFLGFITPSYVYEILVWIVYYNSAMNPLIYAFFYPWFRNAIKLIVTGKILKQNSSTTNLFSE</sequence>
<name>TAA7H_RAT</name>
<gene>
    <name evidence="7 9" type="primary">Taar7h</name>
    <name evidence="6" type="synonym">Ta6</name>
    <name evidence="6" type="synonym">Tar6</name>
    <name evidence="6" type="synonym">Trar6</name>
</gene>